<sequence length="813" mass="91309">MAEEEKIRQTIQELPLLPLRGIIVFPYMVMHLDVGRERSVNAIEEAMAQDRIIFLATQKEAQTDQPGAEDIYQIGVIAEIKQLLKLPGGTIRVLVEGLARAEILEYIDMEPLIRVRVREHIEPDVKSNAVEALMRSLINQFEQYVKISKKIPPETFVSVVAVEDPGRLTDTISSHLTLKTQDKQRILEALDVTERLEILTEILAREMEILELERKINVRVRKQMEKTQKEYYLREQIKAIQKELGEKEDRQAEGEDLRNKIAKAKLPKEVEEKALREVERLEKMPPMVAEATVVRNYLDWLLALPWAKQTKDRLDIDKAEAILNEDHFGLDKVKERIIEYLAIRKLAQKMKGPIICFVGPPGVGKTSLARSIARALERKFVRLSLGGVRDEAEIRGHRRTYVGAMPGRLIQGLRTAGSKNPVFLLDEIDKMSMDFRGDPASALLEVLDPEQNSTFSDHFIEVPFDLSKVLFITTANGMHNIPRPLLDRMEVIYIPGYTEEEKTRIALDHLVPKQLKEHGLKKEQVQISENTVRRLIREYTREAGVRNLEREIASLCRKSARAIVKNPERRLSISAGNLPSYLGIPRFRYGLAEAESQVGVATGLAWTETGGDTLAIEVAHMPGKGNLALTGKLGDVMKESAQASLTYVRSRARELGIADNFHQNTDIHIHVPEGAIPKDGPSAGITIATALTSALSRRPVRREVAMTGEITLRGRVLPVGGIKEKMLAANRAGCTTVILPAENKKDLEEVPANVKKKLRFVLVEHMDQVIREALLEPVPVQAPEPPETIPAAIETSVPVYQGMLEETPPGLQT</sequence>
<feature type="chain" id="PRO_0000396573" description="Lon protease">
    <location>
        <begin position="1"/>
        <end position="813"/>
    </location>
</feature>
<feature type="domain" description="Lon N-terminal" evidence="3">
    <location>
        <begin position="14"/>
        <end position="207"/>
    </location>
</feature>
<feature type="domain" description="Lon proteolytic" evidence="2">
    <location>
        <begin position="595"/>
        <end position="776"/>
    </location>
</feature>
<feature type="active site" evidence="1">
    <location>
        <position position="682"/>
    </location>
</feature>
<feature type="active site" evidence="1">
    <location>
        <position position="725"/>
    </location>
</feature>
<feature type="binding site" evidence="1">
    <location>
        <begin position="359"/>
        <end position="366"/>
    </location>
    <ligand>
        <name>ATP</name>
        <dbReference type="ChEBI" id="CHEBI:30616"/>
    </ligand>
</feature>
<comment type="function">
    <text evidence="1">ATP-dependent serine protease that mediates the selective degradation of mutant and abnormal proteins as well as certain short-lived regulatory proteins. Required for cellular homeostasis and for survival from DNA damage and developmental changes induced by stress. Degrades polypeptides processively to yield small peptide fragments that are 5 to 10 amino acids long. Binds to DNA in a double-stranded, site-specific manner.</text>
</comment>
<comment type="catalytic activity">
    <reaction evidence="1">
        <text>Hydrolysis of proteins in presence of ATP.</text>
        <dbReference type="EC" id="3.4.21.53"/>
    </reaction>
</comment>
<comment type="subunit">
    <text evidence="1">Homohexamer. Organized in a ring with a central cavity.</text>
</comment>
<comment type="subcellular location">
    <subcellularLocation>
        <location evidence="1">Cytoplasm</location>
    </subcellularLocation>
</comment>
<comment type="induction">
    <text evidence="1">By heat shock.</text>
</comment>
<comment type="similarity">
    <text evidence="1">Belongs to the peptidase S16 family.</text>
</comment>
<protein>
    <recommendedName>
        <fullName evidence="1">Lon protease</fullName>
        <ecNumber evidence="1">3.4.21.53</ecNumber>
    </recommendedName>
    <alternativeName>
        <fullName evidence="1">ATP-dependent protease La</fullName>
    </alternativeName>
</protein>
<accession>B0TFI9</accession>
<reference key="1">
    <citation type="journal article" date="2008" name="J. Bacteriol.">
        <title>The genome of Heliobacterium modesticaldum, a phototrophic representative of the Firmicutes containing the simplest photosynthetic apparatus.</title>
        <authorList>
            <person name="Sattley W.M."/>
            <person name="Madigan M.T."/>
            <person name="Swingley W.D."/>
            <person name="Cheung P.C."/>
            <person name="Clocksin K.M."/>
            <person name="Conrad A.L."/>
            <person name="Dejesa L.C."/>
            <person name="Honchak B.M."/>
            <person name="Jung D.O."/>
            <person name="Karbach L.E."/>
            <person name="Kurdoglu A."/>
            <person name="Lahiri S."/>
            <person name="Mastrian S.D."/>
            <person name="Page L.E."/>
            <person name="Taylor H.L."/>
            <person name="Wang Z.T."/>
            <person name="Raymond J."/>
            <person name="Chen M."/>
            <person name="Blankenship R.E."/>
            <person name="Touchman J.W."/>
        </authorList>
    </citation>
    <scope>NUCLEOTIDE SEQUENCE [LARGE SCALE GENOMIC DNA]</scope>
    <source>
        <strain>ATCC 51547 / Ice1</strain>
    </source>
</reference>
<evidence type="ECO:0000255" key="1">
    <source>
        <dbReference type="HAMAP-Rule" id="MF_01973"/>
    </source>
</evidence>
<evidence type="ECO:0000255" key="2">
    <source>
        <dbReference type="PROSITE-ProRule" id="PRU01122"/>
    </source>
</evidence>
<evidence type="ECO:0000255" key="3">
    <source>
        <dbReference type="PROSITE-ProRule" id="PRU01123"/>
    </source>
</evidence>
<organism>
    <name type="scientific">Heliobacterium modesticaldum (strain ATCC 51547 / Ice1)</name>
    <dbReference type="NCBI Taxonomy" id="498761"/>
    <lineage>
        <taxon>Bacteria</taxon>
        <taxon>Bacillati</taxon>
        <taxon>Bacillota</taxon>
        <taxon>Clostridia</taxon>
        <taxon>Eubacteriales</taxon>
        <taxon>Heliobacteriaceae</taxon>
        <taxon>Heliomicrobium</taxon>
    </lineage>
</organism>
<proteinExistence type="inferred from homology"/>
<gene>
    <name evidence="1" type="primary">lon</name>
    <name type="ordered locus">Helmi_02960</name>
    <name type="ORF">HM1_0474</name>
</gene>
<keyword id="KW-0067">ATP-binding</keyword>
<keyword id="KW-0963">Cytoplasm</keyword>
<keyword id="KW-0378">Hydrolase</keyword>
<keyword id="KW-0547">Nucleotide-binding</keyword>
<keyword id="KW-0645">Protease</keyword>
<keyword id="KW-1185">Reference proteome</keyword>
<keyword id="KW-0720">Serine protease</keyword>
<keyword id="KW-0346">Stress response</keyword>
<name>LON_HELMI</name>
<dbReference type="EC" id="3.4.21.53" evidence="1"/>
<dbReference type="EMBL" id="CP000930">
    <property type="protein sequence ID" value="ABZ83088.1"/>
    <property type="molecule type" value="Genomic_DNA"/>
</dbReference>
<dbReference type="RefSeq" id="WP_012281466.1">
    <property type="nucleotide sequence ID" value="NC_010337.2"/>
</dbReference>
<dbReference type="SMR" id="B0TFI9"/>
<dbReference type="STRING" id="498761.HM1_0474"/>
<dbReference type="MEROPS" id="S16.001"/>
<dbReference type="KEGG" id="hmo:HM1_0474"/>
<dbReference type="eggNOG" id="COG0466">
    <property type="taxonomic scope" value="Bacteria"/>
</dbReference>
<dbReference type="HOGENOM" id="CLU_004109_4_3_9"/>
<dbReference type="OrthoDB" id="9803599at2"/>
<dbReference type="Proteomes" id="UP000008550">
    <property type="component" value="Chromosome"/>
</dbReference>
<dbReference type="GO" id="GO:0005737">
    <property type="term" value="C:cytoplasm"/>
    <property type="evidence" value="ECO:0007669"/>
    <property type="project" value="UniProtKB-SubCell"/>
</dbReference>
<dbReference type="GO" id="GO:0005524">
    <property type="term" value="F:ATP binding"/>
    <property type="evidence" value="ECO:0007669"/>
    <property type="project" value="UniProtKB-UniRule"/>
</dbReference>
<dbReference type="GO" id="GO:0016887">
    <property type="term" value="F:ATP hydrolysis activity"/>
    <property type="evidence" value="ECO:0007669"/>
    <property type="project" value="UniProtKB-UniRule"/>
</dbReference>
<dbReference type="GO" id="GO:0004176">
    <property type="term" value="F:ATP-dependent peptidase activity"/>
    <property type="evidence" value="ECO:0007669"/>
    <property type="project" value="UniProtKB-UniRule"/>
</dbReference>
<dbReference type="GO" id="GO:0043565">
    <property type="term" value="F:sequence-specific DNA binding"/>
    <property type="evidence" value="ECO:0007669"/>
    <property type="project" value="UniProtKB-UniRule"/>
</dbReference>
<dbReference type="GO" id="GO:0004252">
    <property type="term" value="F:serine-type endopeptidase activity"/>
    <property type="evidence" value="ECO:0007669"/>
    <property type="project" value="UniProtKB-UniRule"/>
</dbReference>
<dbReference type="GO" id="GO:0034605">
    <property type="term" value="P:cellular response to heat"/>
    <property type="evidence" value="ECO:0007669"/>
    <property type="project" value="UniProtKB-UniRule"/>
</dbReference>
<dbReference type="GO" id="GO:0006515">
    <property type="term" value="P:protein quality control for misfolded or incompletely synthesized proteins"/>
    <property type="evidence" value="ECO:0007669"/>
    <property type="project" value="UniProtKB-UniRule"/>
</dbReference>
<dbReference type="CDD" id="cd19500">
    <property type="entry name" value="RecA-like_Lon"/>
    <property type="match status" value="1"/>
</dbReference>
<dbReference type="FunFam" id="1.20.5.5270:FF:000002">
    <property type="entry name" value="Lon protease homolog"/>
    <property type="match status" value="1"/>
</dbReference>
<dbReference type="FunFam" id="3.40.50.300:FF:000382">
    <property type="entry name" value="Lon protease homolog 2, peroxisomal"/>
    <property type="match status" value="1"/>
</dbReference>
<dbReference type="Gene3D" id="1.10.8.60">
    <property type="match status" value="1"/>
</dbReference>
<dbReference type="Gene3D" id="1.20.5.5270">
    <property type="match status" value="1"/>
</dbReference>
<dbReference type="Gene3D" id="1.20.58.1480">
    <property type="match status" value="1"/>
</dbReference>
<dbReference type="Gene3D" id="3.30.230.10">
    <property type="match status" value="1"/>
</dbReference>
<dbReference type="Gene3D" id="2.30.130.40">
    <property type="entry name" value="LON domain-like"/>
    <property type="match status" value="1"/>
</dbReference>
<dbReference type="Gene3D" id="3.40.50.300">
    <property type="entry name" value="P-loop containing nucleotide triphosphate hydrolases"/>
    <property type="match status" value="1"/>
</dbReference>
<dbReference type="HAMAP" id="MF_01973">
    <property type="entry name" value="lon_bact"/>
    <property type="match status" value="1"/>
</dbReference>
<dbReference type="InterPro" id="IPR003593">
    <property type="entry name" value="AAA+_ATPase"/>
</dbReference>
<dbReference type="InterPro" id="IPR003959">
    <property type="entry name" value="ATPase_AAA_core"/>
</dbReference>
<dbReference type="InterPro" id="IPR027543">
    <property type="entry name" value="Lon_bac"/>
</dbReference>
<dbReference type="InterPro" id="IPR004815">
    <property type="entry name" value="Lon_bac/euk-typ"/>
</dbReference>
<dbReference type="InterPro" id="IPR054594">
    <property type="entry name" value="Lon_lid"/>
</dbReference>
<dbReference type="InterPro" id="IPR008269">
    <property type="entry name" value="Lon_proteolytic"/>
</dbReference>
<dbReference type="InterPro" id="IPR027065">
    <property type="entry name" value="Lon_Prtase"/>
</dbReference>
<dbReference type="InterPro" id="IPR003111">
    <property type="entry name" value="Lon_prtase_N"/>
</dbReference>
<dbReference type="InterPro" id="IPR046336">
    <property type="entry name" value="Lon_prtase_N_sf"/>
</dbReference>
<dbReference type="InterPro" id="IPR027417">
    <property type="entry name" value="P-loop_NTPase"/>
</dbReference>
<dbReference type="InterPro" id="IPR008268">
    <property type="entry name" value="Peptidase_S16_AS"/>
</dbReference>
<dbReference type="InterPro" id="IPR015947">
    <property type="entry name" value="PUA-like_sf"/>
</dbReference>
<dbReference type="InterPro" id="IPR020568">
    <property type="entry name" value="Ribosomal_Su5_D2-typ_SF"/>
</dbReference>
<dbReference type="InterPro" id="IPR014721">
    <property type="entry name" value="Ribsml_uS5_D2-typ_fold_subgr"/>
</dbReference>
<dbReference type="NCBIfam" id="TIGR00763">
    <property type="entry name" value="lon"/>
    <property type="match status" value="1"/>
</dbReference>
<dbReference type="NCBIfam" id="NF008053">
    <property type="entry name" value="PRK10787.1"/>
    <property type="match status" value="1"/>
</dbReference>
<dbReference type="PANTHER" id="PTHR10046">
    <property type="entry name" value="ATP DEPENDENT LON PROTEASE FAMILY MEMBER"/>
    <property type="match status" value="1"/>
</dbReference>
<dbReference type="Pfam" id="PF00004">
    <property type="entry name" value="AAA"/>
    <property type="match status" value="1"/>
</dbReference>
<dbReference type="Pfam" id="PF05362">
    <property type="entry name" value="Lon_C"/>
    <property type="match status" value="1"/>
</dbReference>
<dbReference type="Pfam" id="PF22667">
    <property type="entry name" value="Lon_lid"/>
    <property type="match status" value="1"/>
</dbReference>
<dbReference type="Pfam" id="PF02190">
    <property type="entry name" value="LON_substr_bdg"/>
    <property type="match status" value="1"/>
</dbReference>
<dbReference type="PIRSF" id="PIRSF001174">
    <property type="entry name" value="Lon_proteas"/>
    <property type="match status" value="1"/>
</dbReference>
<dbReference type="PRINTS" id="PR00830">
    <property type="entry name" value="ENDOLAPTASE"/>
</dbReference>
<dbReference type="SMART" id="SM00382">
    <property type="entry name" value="AAA"/>
    <property type="match status" value="1"/>
</dbReference>
<dbReference type="SMART" id="SM00464">
    <property type="entry name" value="LON"/>
    <property type="match status" value="1"/>
</dbReference>
<dbReference type="SUPFAM" id="SSF52540">
    <property type="entry name" value="P-loop containing nucleoside triphosphate hydrolases"/>
    <property type="match status" value="1"/>
</dbReference>
<dbReference type="SUPFAM" id="SSF88697">
    <property type="entry name" value="PUA domain-like"/>
    <property type="match status" value="1"/>
</dbReference>
<dbReference type="SUPFAM" id="SSF54211">
    <property type="entry name" value="Ribosomal protein S5 domain 2-like"/>
    <property type="match status" value="1"/>
</dbReference>
<dbReference type="PROSITE" id="PS51787">
    <property type="entry name" value="LON_N"/>
    <property type="match status" value="1"/>
</dbReference>
<dbReference type="PROSITE" id="PS51786">
    <property type="entry name" value="LON_PROTEOLYTIC"/>
    <property type="match status" value="1"/>
</dbReference>
<dbReference type="PROSITE" id="PS01046">
    <property type="entry name" value="LON_SER"/>
    <property type="match status" value="1"/>
</dbReference>